<evidence type="ECO:0000255" key="1">
    <source>
        <dbReference type="HAMAP-Rule" id="MF_00083"/>
    </source>
</evidence>
<evidence type="ECO:0000305" key="2"/>
<keyword id="KW-0963">Cytoplasm</keyword>
<keyword id="KW-0378">Hydrolase</keyword>
<keyword id="KW-1185">Reference proteome</keyword>
<keyword id="KW-0694">RNA-binding</keyword>
<keyword id="KW-0820">tRNA-binding</keyword>
<accession>Q251S4</accession>
<comment type="function">
    <text evidence="1">Hydrolyzes ribosome-free peptidyl-tRNAs (with 1 or more amino acids incorporated), which drop off the ribosome during protein synthesis, or as a result of ribosome stalling.</text>
</comment>
<comment type="function">
    <text evidence="1">Catalyzes the release of premature peptidyl moieties from peptidyl-tRNA molecules trapped in stalled 50S ribosomal subunits, and thus maintains levels of free tRNAs and 50S ribosomes.</text>
</comment>
<comment type="catalytic activity">
    <reaction evidence="1">
        <text>an N-acyl-L-alpha-aminoacyl-tRNA + H2O = an N-acyl-L-amino acid + a tRNA + H(+)</text>
        <dbReference type="Rhea" id="RHEA:54448"/>
        <dbReference type="Rhea" id="RHEA-COMP:10123"/>
        <dbReference type="Rhea" id="RHEA-COMP:13883"/>
        <dbReference type="ChEBI" id="CHEBI:15377"/>
        <dbReference type="ChEBI" id="CHEBI:15378"/>
        <dbReference type="ChEBI" id="CHEBI:59874"/>
        <dbReference type="ChEBI" id="CHEBI:78442"/>
        <dbReference type="ChEBI" id="CHEBI:138191"/>
        <dbReference type="EC" id="3.1.1.29"/>
    </reaction>
</comment>
<comment type="subunit">
    <text evidence="1">Monomer.</text>
</comment>
<comment type="subcellular location">
    <subcellularLocation>
        <location evidence="1">Cytoplasm</location>
    </subcellularLocation>
</comment>
<comment type="similarity">
    <text evidence="1">Belongs to the PTH family.</text>
</comment>
<comment type="sequence caution" evidence="2">
    <conflict type="erroneous initiation">
        <sequence resource="EMBL-CDS" id="BAE81968"/>
    </conflict>
    <text>Extended N-terminus.</text>
</comment>
<gene>
    <name evidence="1" type="primary">pth</name>
    <name type="ordered locus">DSY0179</name>
</gene>
<feature type="chain" id="PRO_0000264032" description="Peptidyl-tRNA hydrolase">
    <location>
        <begin position="1"/>
        <end position="185"/>
    </location>
</feature>
<feature type="active site" description="Proton acceptor" evidence="1">
    <location>
        <position position="19"/>
    </location>
</feature>
<feature type="binding site" evidence="1">
    <location>
        <position position="14"/>
    </location>
    <ligand>
        <name>tRNA</name>
        <dbReference type="ChEBI" id="CHEBI:17843"/>
    </ligand>
</feature>
<feature type="binding site" evidence="1">
    <location>
        <position position="63"/>
    </location>
    <ligand>
        <name>tRNA</name>
        <dbReference type="ChEBI" id="CHEBI:17843"/>
    </ligand>
</feature>
<feature type="binding site" evidence="1">
    <location>
        <position position="65"/>
    </location>
    <ligand>
        <name>tRNA</name>
        <dbReference type="ChEBI" id="CHEBI:17843"/>
    </ligand>
</feature>
<feature type="binding site" evidence="1">
    <location>
        <position position="111"/>
    </location>
    <ligand>
        <name>tRNA</name>
        <dbReference type="ChEBI" id="CHEBI:17843"/>
    </ligand>
</feature>
<feature type="site" description="Discriminates between blocked and unblocked aminoacyl-tRNA" evidence="1">
    <location>
        <position position="9"/>
    </location>
</feature>
<feature type="site" description="Stabilizes the basic form of H active site to accept a proton" evidence="1">
    <location>
        <position position="90"/>
    </location>
</feature>
<protein>
    <recommendedName>
        <fullName evidence="1">Peptidyl-tRNA hydrolase</fullName>
        <shortName evidence="1">Pth</shortName>
        <ecNumber evidence="1">3.1.1.29</ecNumber>
    </recommendedName>
</protein>
<reference key="1">
    <citation type="journal article" date="2006" name="J. Bacteriol.">
        <title>Complete genome sequence of the dehalorespiring bacterium Desulfitobacterium hafniense Y51 and comparison with Dehalococcoides ethenogenes 195.</title>
        <authorList>
            <person name="Nonaka H."/>
            <person name="Keresztes G."/>
            <person name="Shinoda Y."/>
            <person name="Ikenaga Y."/>
            <person name="Abe M."/>
            <person name="Naito K."/>
            <person name="Inatomi K."/>
            <person name="Furukawa K."/>
            <person name="Inui M."/>
            <person name="Yukawa H."/>
        </authorList>
    </citation>
    <scope>NUCLEOTIDE SEQUENCE [LARGE SCALE GENOMIC DNA]</scope>
    <source>
        <strain>Y51</strain>
    </source>
</reference>
<sequence>MKLIAGLGNPGGQYAETRHNAGFLLLDCLAEELKLDFRPKFQGLVAETMMGGEKVYLLKPQTFMNLSGRSIRELAQFYKIAPKDIMVVYDDMDLPIGRLRLRSSGSAGGHNGIKSTIAELGTEDFWRLKVGIGRPTAGWDSARYVLASFTKEELPVLEEILDKGIKAVTLWAKEGGDKAMNLYNR</sequence>
<dbReference type="EC" id="3.1.1.29" evidence="1"/>
<dbReference type="EMBL" id="AP008230">
    <property type="protein sequence ID" value="BAE81968.1"/>
    <property type="status" value="ALT_INIT"/>
    <property type="molecule type" value="Genomic_DNA"/>
</dbReference>
<dbReference type="RefSeq" id="WP_005814896.1">
    <property type="nucleotide sequence ID" value="NC_007907.1"/>
</dbReference>
<dbReference type="SMR" id="Q251S4"/>
<dbReference type="STRING" id="138119.DSY0179"/>
<dbReference type="KEGG" id="dsy:DSY0179"/>
<dbReference type="eggNOG" id="COG0193">
    <property type="taxonomic scope" value="Bacteria"/>
</dbReference>
<dbReference type="HOGENOM" id="CLU_062456_4_1_9"/>
<dbReference type="Proteomes" id="UP000001946">
    <property type="component" value="Chromosome"/>
</dbReference>
<dbReference type="GO" id="GO:0005737">
    <property type="term" value="C:cytoplasm"/>
    <property type="evidence" value="ECO:0007669"/>
    <property type="project" value="UniProtKB-SubCell"/>
</dbReference>
<dbReference type="GO" id="GO:0004045">
    <property type="term" value="F:peptidyl-tRNA hydrolase activity"/>
    <property type="evidence" value="ECO:0007669"/>
    <property type="project" value="UniProtKB-UniRule"/>
</dbReference>
<dbReference type="GO" id="GO:0000049">
    <property type="term" value="F:tRNA binding"/>
    <property type="evidence" value="ECO:0007669"/>
    <property type="project" value="UniProtKB-UniRule"/>
</dbReference>
<dbReference type="GO" id="GO:0006515">
    <property type="term" value="P:protein quality control for misfolded or incompletely synthesized proteins"/>
    <property type="evidence" value="ECO:0007669"/>
    <property type="project" value="UniProtKB-UniRule"/>
</dbReference>
<dbReference type="GO" id="GO:0072344">
    <property type="term" value="P:rescue of stalled ribosome"/>
    <property type="evidence" value="ECO:0007669"/>
    <property type="project" value="UniProtKB-UniRule"/>
</dbReference>
<dbReference type="CDD" id="cd00462">
    <property type="entry name" value="PTH"/>
    <property type="match status" value="1"/>
</dbReference>
<dbReference type="FunFam" id="3.40.50.1470:FF:000001">
    <property type="entry name" value="Peptidyl-tRNA hydrolase"/>
    <property type="match status" value="1"/>
</dbReference>
<dbReference type="Gene3D" id="3.40.50.1470">
    <property type="entry name" value="Peptidyl-tRNA hydrolase"/>
    <property type="match status" value="1"/>
</dbReference>
<dbReference type="HAMAP" id="MF_00083">
    <property type="entry name" value="Pept_tRNA_hydro_bact"/>
    <property type="match status" value="1"/>
</dbReference>
<dbReference type="InterPro" id="IPR001328">
    <property type="entry name" value="Pept_tRNA_hydro"/>
</dbReference>
<dbReference type="InterPro" id="IPR018171">
    <property type="entry name" value="Pept_tRNA_hydro_CS"/>
</dbReference>
<dbReference type="InterPro" id="IPR036416">
    <property type="entry name" value="Pept_tRNA_hydro_sf"/>
</dbReference>
<dbReference type="NCBIfam" id="TIGR00447">
    <property type="entry name" value="pth"/>
    <property type="match status" value="1"/>
</dbReference>
<dbReference type="PANTHER" id="PTHR17224">
    <property type="entry name" value="PEPTIDYL-TRNA HYDROLASE"/>
    <property type="match status" value="1"/>
</dbReference>
<dbReference type="PANTHER" id="PTHR17224:SF1">
    <property type="entry name" value="PEPTIDYL-TRNA HYDROLASE"/>
    <property type="match status" value="1"/>
</dbReference>
<dbReference type="Pfam" id="PF01195">
    <property type="entry name" value="Pept_tRNA_hydro"/>
    <property type="match status" value="1"/>
</dbReference>
<dbReference type="SUPFAM" id="SSF53178">
    <property type="entry name" value="Peptidyl-tRNA hydrolase-like"/>
    <property type="match status" value="1"/>
</dbReference>
<dbReference type="PROSITE" id="PS01195">
    <property type="entry name" value="PEPT_TRNA_HYDROL_1"/>
    <property type="match status" value="1"/>
</dbReference>
<dbReference type="PROSITE" id="PS01196">
    <property type="entry name" value="PEPT_TRNA_HYDROL_2"/>
    <property type="match status" value="1"/>
</dbReference>
<name>PTH_DESHY</name>
<organism>
    <name type="scientific">Desulfitobacterium hafniense (strain Y51)</name>
    <dbReference type="NCBI Taxonomy" id="138119"/>
    <lineage>
        <taxon>Bacteria</taxon>
        <taxon>Bacillati</taxon>
        <taxon>Bacillota</taxon>
        <taxon>Clostridia</taxon>
        <taxon>Eubacteriales</taxon>
        <taxon>Desulfitobacteriaceae</taxon>
        <taxon>Desulfitobacterium</taxon>
    </lineage>
</organism>
<proteinExistence type="inferred from homology"/>